<comment type="function">
    <text evidence="1">Component of the acetyl coenzyme A carboxylase (ACC) complex. First, biotin carboxylase catalyzes the carboxylation of biotin on its carrier protein (BCCP) and then the CO(2) group is transferred by the carboxyltransferase to acetyl-CoA to form malonyl-CoA.</text>
</comment>
<comment type="catalytic activity">
    <reaction evidence="1">
        <text>N(6)-carboxybiotinyl-L-lysyl-[protein] + acetyl-CoA = N(6)-biotinyl-L-lysyl-[protein] + malonyl-CoA</text>
        <dbReference type="Rhea" id="RHEA:54728"/>
        <dbReference type="Rhea" id="RHEA-COMP:10505"/>
        <dbReference type="Rhea" id="RHEA-COMP:10506"/>
        <dbReference type="ChEBI" id="CHEBI:57288"/>
        <dbReference type="ChEBI" id="CHEBI:57384"/>
        <dbReference type="ChEBI" id="CHEBI:83144"/>
        <dbReference type="ChEBI" id="CHEBI:83145"/>
        <dbReference type="EC" id="2.1.3.15"/>
    </reaction>
</comment>
<comment type="pathway">
    <text evidence="1">Lipid metabolism; malonyl-CoA biosynthesis; malonyl-CoA from acetyl-CoA: step 1/1.</text>
</comment>
<comment type="subunit">
    <text evidence="1">Acetyl-CoA carboxylase is a heterohexamer composed of biotin carboxyl carrier protein (AccB), biotin carboxylase (AccC) and two subunits each of ACCase subunit alpha (AccA) and ACCase subunit beta (AccD).</text>
</comment>
<comment type="subcellular location">
    <subcellularLocation>
        <location evidence="1">Cytoplasm</location>
    </subcellularLocation>
</comment>
<comment type="similarity">
    <text evidence="1">Belongs to the AccA family.</text>
</comment>
<proteinExistence type="inferred from homology"/>
<protein>
    <recommendedName>
        <fullName evidence="1">Acetyl-coenzyme A carboxylase carboxyl transferase subunit alpha</fullName>
        <shortName evidence="1">ACCase subunit alpha</shortName>
        <shortName evidence="1">Acetyl-CoA carboxylase carboxyltransferase subunit alpha</shortName>
        <ecNumber evidence="1">2.1.3.15</ecNumber>
    </recommendedName>
</protein>
<sequence>MATYLDFEQKIKIIQEDIISAQVRHDDGLVASLKKNLDKEVSKIFTNLSPFQQLQLARHVDRPYALDYINLLMRDKYEIHGDRHFRDDAAILCYIGYIGEEKVVVIGEQKGRGTKNKIKRNFGMPHPEGYRKALRAAKLAEKFNLPLLMLVDTPGAYPGIGAEERNQSEAIARNLLELSQLNTQSISVVIGEGGSGGALAIGVADRFAMMRYSVFSVISPEGCSAILWNDPAKVESATNAMKITSGDLKELNLIDDIIAEPLIGAHRDRDSAAAAIGEYFLSELKKLRQMSNEQRMEERYKKLTSVGAFSE</sequence>
<evidence type="ECO:0000255" key="1">
    <source>
        <dbReference type="HAMAP-Rule" id="MF_00823"/>
    </source>
</evidence>
<evidence type="ECO:0000255" key="2">
    <source>
        <dbReference type="PROSITE-ProRule" id="PRU01137"/>
    </source>
</evidence>
<reference key="1">
    <citation type="journal article" date="2008" name="Appl. Environ. Microbiol.">
        <title>Genome of the epsilonproteobacterial chemolithoautotroph Sulfurimonas denitrificans.</title>
        <authorList>
            <person name="Sievert S.M."/>
            <person name="Scott K.M."/>
            <person name="Klotz M.G."/>
            <person name="Chain P.S.G."/>
            <person name="Hauser L.J."/>
            <person name="Hemp J."/>
            <person name="Huegler M."/>
            <person name="Land M."/>
            <person name="Lapidus A."/>
            <person name="Larimer F.W."/>
            <person name="Lucas S."/>
            <person name="Malfatti S.A."/>
            <person name="Meyer F."/>
            <person name="Paulsen I.T."/>
            <person name="Ren Q."/>
            <person name="Simon J."/>
            <person name="Bailey K."/>
            <person name="Diaz E."/>
            <person name="Fitzpatrick K.A."/>
            <person name="Glover B."/>
            <person name="Gwatney N."/>
            <person name="Korajkic A."/>
            <person name="Long A."/>
            <person name="Mobberley J.M."/>
            <person name="Pantry S.N."/>
            <person name="Pazder G."/>
            <person name="Peterson S."/>
            <person name="Quintanilla J.D."/>
            <person name="Sprinkle R."/>
            <person name="Stephens J."/>
            <person name="Thomas P."/>
            <person name="Vaughn R."/>
            <person name="Weber M.J."/>
            <person name="Wooten L.L."/>
        </authorList>
    </citation>
    <scope>NUCLEOTIDE SEQUENCE [LARGE SCALE GENOMIC DNA]</scope>
    <source>
        <strain>ATCC 33889 / DSM 1251</strain>
    </source>
</reference>
<name>ACCA_SULDN</name>
<organism>
    <name type="scientific">Sulfurimonas denitrificans (strain ATCC 33889 / DSM 1251)</name>
    <name type="common">Thiomicrospira denitrificans (strain ATCC 33889 / DSM 1251)</name>
    <dbReference type="NCBI Taxonomy" id="326298"/>
    <lineage>
        <taxon>Bacteria</taxon>
        <taxon>Pseudomonadati</taxon>
        <taxon>Campylobacterota</taxon>
        <taxon>Epsilonproteobacteria</taxon>
        <taxon>Campylobacterales</taxon>
        <taxon>Sulfurimonadaceae</taxon>
        <taxon>Sulfurimonas</taxon>
    </lineage>
</organism>
<accession>Q30Q46</accession>
<feature type="chain" id="PRO_1000072886" description="Acetyl-coenzyme A carboxylase carboxyl transferase subunit alpha">
    <location>
        <begin position="1"/>
        <end position="311"/>
    </location>
</feature>
<feature type="domain" description="CoA carboxyltransferase C-terminal" evidence="2">
    <location>
        <begin position="36"/>
        <end position="286"/>
    </location>
</feature>
<dbReference type="EC" id="2.1.3.15" evidence="1"/>
<dbReference type="EMBL" id="CP000153">
    <property type="protein sequence ID" value="ABB44885.1"/>
    <property type="molecule type" value="Genomic_DNA"/>
</dbReference>
<dbReference type="RefSeq" id="WP_011373226.1">
    <property type="nucleotide sequence ID" value="NC_007575.1"/>
</dbReference>
<dbReference type="SMR" id="Q30Q46"/>
<dbReference type="STRING" id="326298.Suden_1608"/>
<dbReference type="KEGG" id="tdn:Suden_1608"/>
<dbReference type="eggNOG" id="COG0825">
    <property type="taxonomic scope" value="Bacteria"/>
</dbReference>
<dbReference type="HOGENOM" id="CLU_015486_0_2_7"/>
<dbReference type="OrthoDB" id="9808023at2"/>
<dbReference type="UniPathway" id="UPA00655">
    <property type="reaction ID" value="UER00711"/>
</dbReference>
<dbReference type="Proteomes" id="UP000002714">
    <property type="component" value="Chromosome"/>
</dbReference>
<dbReference type="GO" id="GO:0009317">
    <property type="term" value="C:acetyl-CoA carboxylase complex"/>
    <property type="evidence" value="ECO:0007669"/>
    <property type="project" value="InterPro"/>
</dbReference>
<dbReference type="GO" id="GO:0003989">
    <property type="term" value="F:acetyl-CoA carboxylase activity"/>
    <property type="evidence" value="ECO:0007669"/>
    <property type="project" value="InterPro"/>
</dbReference>
<dbReference type="GO" id="GO:0005524">
    <property type="term" value="F:ATP binding"/>
    <property type="evidence" value="ECO:0007669"/>
    <property type="project" value="UniProtKB-KW"/>
</dbReference>
<dbReference type="GO" id="GO:0016743">
    <property type="term" value="F:carboxyl- or carbamoyltransferase activity"/>
    <property type="evidence" value="ECO:0007669"/>
    <property type="project" value="UniProtKB-UniRule"/>
</dbReference>
<dbReference type="GO" id="GO:0006633">
    <property type="term" value="P:fatty acid biosynthetic process"/>
    <property type="evidence" value="ECO:0007669"/>
    <property type="project" value="UniProtKB-KW"/>
</dbReference>
<dbReference type="GO" id="GO:2001295">
    <property type="term" value="P:malonyl-CoA biosynthetic process"/>
    <property type="evidence" value="ECO:0007669"/>
    <property type="project" value="UniProtKB-UniRule"/>
</dbReference>
<dbReference type="Gene3D" id="3.90.226.10">
    <property type="entry name" value="2-enoyl-CoA Hydratase, Chain A, domain 1"/>
    <property type="match status" value="1"/>
</dbReference>
<dbReference type="HAMAP" id="MF_00823">
    <property type="entry name" value="AcetylCoA_CT_alpha"/>
    <property type="match status" value="1"/>
</dbReference>
<dbReference type="InterPro" id="IPR001095">
    <property type="entry name" value="Acetyl_CoA_COase_a_su"/>
</dbReference>
<dbReference type="InterPro" id="IPR029045">
    <property type="entry name" value="ClpP/crotonase-like_dom_sf"/>
</dbReference>
<dbReference type="InterPro" id="IPR011763">
    <property type="entry name" value="COA_CT_C"/>
</dbReference>
<dbReference type="NCBIfam" id="TIGR00513">
    <property type="entry name" value="accA"/>
    <property type="match status" value="1"/>
</dbReference>
<dbReference type="NCBIfam" id="NF041504">
    <property type="entry name" value="AccA_sub"/>
    <property type="match status" value="1"/>
</dbReference>
<dbReference type="NCBIfam" id="NF004344">
    <property type="entry name" value="PRK05724.1"/>
    <property type="match status" value="1"/>
</dbReference>
<dbReference type="PANTHER" id="PTHR42853">
    <property type="entry name" value="ACETYL-COENZYME A CARBOXYLASE CARBOXYL TRANSFERASE SUBUNIT ALPHA"/>
    <property type="match status" value="1"/>
</dbReference>
<dbReference type="PANTHER" id="PTHR42853:SF3">
    <property type="entry name" value="ACETYL-COENZYME A CARBOXYLASE CARBOXYL TRANSFERASE SUBUNIT ALPHA, CHLOROPLASTIC"/>
    <property type="match status" value="1"/>
</dbReference>
<dbReference type="Pfam" id="PF03255">
    <property type="entry name" value="ACCA"/>
    <property type="match status" value="1"/>
</dbReference>
<dbReference type="PRINTS" id="PR01069">
    <property type="entry name" value="ACCCTRFRASEA"/>
</dbReference>
<dbReference type="SUPFAM" id="SSF52096">
    <property type="entry name" value="ClpP/crotonase"/>
    <property type="match status" value="1"/>
</dbReference>
<dbReference type="PROSITE" id="PS50989">
    <property type="entry name" value="COA_CT_CTER"/>
    <property type="match status" value="1"/>
</dbReference>
<keyword id="KW-0067">ATP-binding</keyword>
<keyword id="KW-0963">Cytoplasm</keyword>
<keyword id="KW-0275">Fatty acid biosynthesis</keyword>
<keyword id="KW-0276">Fatty acid metabolism</keyword>
<keyword id="KW-0444">Lipid biosynthesis</keyword>
<keyword id="KW-0443">Lipid metabolism</keyword>
<keyword id="KW-0547">Nucleotide-binding</keyword>
<keyword id="KW-1185">Reference proteome</keyword>
<keyword id="KW-0808">Transferase</keyword>
<gene>
    <name evidence="1" type="primary">accA</name>
    <name type="ordered locus">Suden_1608</name>
</gene>